<dbReference type="EMBL" id="AE014133">
    <property type="protein sequence ID" value="AAN58820.1"/>
    <property type="status" value="ALT_INIT"/>
    <property type="molecule type" value="Genomic_DNA"/>
</dbReference>
<dbReference type="RefSeq" id="NP_721514.3">
    <property type="nucleotide sequence ID" value="NC_004350.2"/>
</dbReference>
<dbReference type="SMR" id="Q8DU30"/>
<dbReference type="STRING" id="210007.SMU_1127"/>
<dbReference type="KEGG" id="smu:SMU_1127"/>
<dbReference type="PATRIC" id="fig|210007.7.peg.1010"/>
<dbReference type="eggNOG" id="COG0268">
    <property type="taxonomic scope" value="Bacteria"/>
</dbReference>
<dbReference type="HOGENOM" id="CLU_160655_1_1_9"/>
<dbReference type="OrthoDB" id="9808392at2"/>
<dbReference type="PhylomeDB" id="Q8DU30"/>
<dbReference type="Proteomes" id="UP000002512">
    <property type="component" value="Chromosome"/>
</dbReference>
<dbReference type="GO" id="GO:0005829">
    <property type="term" value="C:cytosol"/>
    <property type="evidence" value="ECO:0007669"/>
    <property type="project" value="TreeGrafter"/>
</dbReference>
<dbReference type="GO" id="GO:0015935">
    <property type="term" value="C:small ribosomal subunit"/>
    <property type="evidence" value="ECO:0007669"/>
    <property type="project" value="TreeGrafter"/>
</dbReference>
<dbReference type="GO" id="GO:0070181">
    <property type="term" value="F:small ribosomal subunit rRNA binding"/>
    <property type="evidence" value="ECO:0007669"/>
    <property type="project" value="TreeGrafter"/>
</dbReference>
<dbReference type="GO" id="GO:0003735">
    <property type="term" value="F:structural constituent of ribosome"/>
    <property type="evidence" value="ECO:0007669"/>
    <property type="project" value="InterPro"/>
</dbReference>
<dbReference type="GO" id="GO:0006412">
    <property type="term" value="P:translation"/>
    <property type="evidence" value="ECO:0007669"/>
    <property type="project" value="UniProtKB-UniRule"/>
</dbReference>
<dbReference type="FunFam" id="1.20.58.110:FF:000001">
    <property type="entry name" value="30S ribosomal protein S20"/>
    <property type="match status" value="1"/>
</dbReference>
<dbReference type="Gene3D" id="1.20.58.110">
    <property type="entry name" value="Ribosomal protein S20"/>
    <property type="match status" value="1"/>
</dbReference>
<dbReference type="HAMAP" id="MF_00500">
    <property type="entry name" value="Ribosomal_bS20"/>
    <property type="match status" value="1"/>
</dbReference>
<dbReference type="InterPro" id="IPR002583">
    <property type="entry name" value="Ribosomal_bS20"/>
</dbReference>
<dbReference type="InterPro" id="IPR036510">
    <property type="entry name" value="Ribosomal_bS20_sf"/>
</dbReference>
<dbReference type="NCBIfam" id="TIGR00029">
    <property type="entry name" value="S20"/>
    <property type="match status" value="1"/>
</dbReference>
<dbReference type="PANTHER" id="PTHR33398">
    <property type="entry name" value="30S RIBOSOMAL PROTEIN S20"/>
    <property type="match status" value="1"/>
</dbReference>
<dbReference type="PANTHER" id="PTHR33398:SF1">
    <property type="entry name" value="SMALL RIBOSOMAL SUBUNIT PROTEIN BS20C"/>
    <property type="match status" value="1"/>
</dbReference>
<dbReference type="Pfam" id="PF01649">
    <property type="entry name" value="Ribosomal_S20p"/>
    <property type="match status" value="1"/>
</dbReference>
<dbReference type="SUPFAM" id="SSF46992">
    <property type="entry name" value="Ribosomal protein S20"/>
    <property type="match status" value="1"/>
</dbReference>
<sequence>MANIKSAIKRAELNVKQNNRNSAQKSAMRSAIKAFEANPNEELFRAASSSIDKAKSKGLIHKNKASRDKARLASKLAK</sequence>
<comment type="function">
    <text evidence="1">Binds directly to 16S ribosomal RNA.</text>
</comment>
<comment type="similarity">
    <text evidence="1">Belongs to the bacterial ribosomal protein bS20 family.</text>
</comment>
<comment type="sequence caution" evidence="3">
    <conflict type="erroneous initiation">
        <sequence resource="EMBL-CDS" id="AAN58820"/>
    </conflict>
</comment>
<feature type="chain" id="PRO_0000168034" description="Small ribosomal subunit protein bS20">
    <location>
        <begin position="1"/>
        <end position="78"/>
    </location>
</feature>
<feature type="region of interest" description="Disordered" evidence="2">
    <location>
        <begin position="55"/>
        <end position="78"/>
    </location>
</feature>
<gene>
    <name evidence="1" type="primary">rpsT</name>
    <name type="ordered locus">SMU_1127</name>
</gene>
<reference key="1">
    <citation type="journal article" date="2002" name="Proc. Natl. Acad. Sci. U.S.A.">
        <title>Genome sequence of Streptococcus mutans UA159, a cariogenic dental pathogen.</title>
        <authorList>
            <person name="Ajdic D.J."/>
            <person name="McShan W.M."/>
            <person name="McLaughlin R.E."/>
            <person name="Savic G."/>
            <person name="Chang J."/>
            <person name="Carson M.B."/>
            <person name="Primeaux C."/>
            <person name="Tian R."/>
            <person name="Kenton S."/>
            <person name="Jia H.G."/>
            <person name="Lin S.P."/>
            <person name="Qian Y."/>
            <person name="Li S."/>
            <person name="Zhu H."/>
            <person name="Najar F.Z."/>
            <person name="Lai H."/>
            <person name="White J."/>
            <person name="Roe B.A."/>
            <person name="Ferretti J.J."/>
        </authorList>
    </citation>
    <scope>NUCLEOTIDE SEQUENCE [LARGE SCALE GENOMIC DNA]</scope>
    <source>
        <strain>ATCC 700610 / UA159</strain>
    </source>
</reference>
<name>RS20_STRMU</name>
<evidence type="ECO:0000255" key="1">
    <source>
        <dbReference type="HAMAP-Rule" id="MF_00500"/>
    </source>
</evidence>
<evidence type="ECO:0000256" key="2">
    <source>
        <dbReference type="SAM" id="MobiDB-lite"/>
    </source>
</evidence>
<evidence type="ECO:0000305" key="3"/>
<proteinExistence type="inferred from homology"/>
<accession>Q8DU30</accession>
<protein>
    <recommendedName>
        <fullName evidence="1">Small ribosomal subunit protein bS20</fullName>
    </recommendedName>
    <alternativeName>
        <fullName evidence="3">30S ribosomal protein S20</fullName>
    </alternativeName>
</protein>
<keyword id="KW-1185">Reference proteome</keyword>
<keyword id="KW-0687">Ribonucleoprotein</keyword>
<keyword id="KW-0689">Ribosomal protein</keyword>
<keyword id="KW-0694">RNA-binding</keyword>
<keyword id="KW-0699">rRNA-binding</keyword>
<organism>
    <name type="scientific">Streptococcus mutans serotype c (strain ATCC 700610 / UA159)</name>
    <dbReference type="NCBI Taxonomy" id="210007"/>
    <lineage>
        <taxon>Bacteria</taxon>
        <taxon>Bacillati</taxon>
        <taxon>Bacillota</taxon>
        <taxon>Bacilli</taxon>
        <taxon>Lactobacillales</taxon>
        <taxon>Streptococcaceae</taxon>
        <taxon>Streptococcus</taxon>
    </lineage>
</organism>